<organism>
    <name type="scientific">Rattus norvegicus</name>
    <name type="common">Rat</name>
    <dbReference type="NCBI Taxonomy" id="10116"/>
    <lineage>
        <taxon>Eukaryota</taxon>
        <taxon>Metazoa</taxon>
        <taxon>Chordata</taxon>
        <taxon>Craniata</taxon>
        <taxon>Vertebrata</taxon>
        <taxon>Euteleostomi</taxon>
        <taxon>Mammalia</taxon>
        <taxon>Eutheria</taxon>
        <taxon>Euarchontoglires</taxon>
        <taxon>Glires</taxon>
        <taxon>Rodentia</taxon>
        <taxon>Myomorpha</taxon>
        <taxon>Muroidea</taxon>
        <taxon>Muridae</taxon>
        <taxon>Murinae</taxon>
        <taxon>Rattus</taxon>
    </lineage>
</organism>
<protein>
    <recommendedName>
        <fullName evidence="8">Glycogen [starch] synthase, liver</fullName>
        <ecNumber evidence="6">2.4.1.11</ecNumber>
    </recommendedName>
    <alternativeName>
        <fullName evidence="9">Glycogen synthase 2</fullName>
    </alternativeName>
</protein>
<sequence length="704" mass="80734">MLRGRSLSVTSLGGLPAWEAERLPVEDLLLFEVSWEVTNKVGGICTVIQSKAKTTANEWGENYFLIGPYFEHNVKTQVEPCEPANDAVRKAVDAMNKHGCQVHFGRWLIEGSPYVVLFDISSSVWNLDRWKGDFWEACGVGIPHDDREANDMLIFGSLTAWFLKEVTDHADGKHVIAQFHEWQAGTGLILSRARKLPIATIFTTHATLLGRYLCAANIDFYNQLDKFNIDKEAGERQIYHRYCMERASVHCAHVFTTVSEITAIEADHMLKRKPDVVTPNGLNVKKFSAVHEFQNLHATYKARIQDFVRGHFYGHLDFDLEKTLFLFIAGRYEFSNKGADIFLESLSRLNFLLRMHKSNVTVVVFFIMPAKTNNFNVETLKGQAVRKQLWDTVHCMKEKFGKKLYDGLLRGEIPDMNSILDRDDLTIMKRAIFSTQRHSLPPVTTHNMIDDSTDPILSTIRRIGLFNNRTDRVKVILHPEFLSSTSPLLPMDYEEFVRGCHLGVFPSYYEPWGYTPAECTVMGIPSVTTNLSGFGCFMQEHVADPTAYGIYIVDRRFRSPDDSCNQLTQFLYGFCKQSRRQRIIQRNRTERLSDLLDWRYLGRYYQHARHLTLSRAFPDKFHLEPTSPPTTDGFKYPRPSSVPPSPSGSQTSSPQSSDVENEGDEDERYDEEEEAERDRLNIKSPFSLNHIPKGKKKLHGEYKN</sequence>
<reference key="1">
    <citation type="journal article" date="1990" name="J. Biol. Chem.">
        <title>The primary structure of rat liver glycogen synthase deduced by cDNA cloning. Absence of phosphorylation sites 1a and 1b.</title>
        <authorList>
            <person name="Bai G."/>
            <person name="Zhang Z."/>
            <person name="Werner R."/>
            <person name="Nuttall F.Q."/>
            <person name="Tan A.W.H."/>
            <person name="Lee E.Y.C."/>
        </authorList>
    </citation>
    <scope>NUCLEOTIDE SEQUENCE [MRNA]</scope>
    <source>
        <tissue>Liver</tissue>
    </source>
</reference>
<reference key="2">
    <citation type="submission" date="2001-02" db="EMBL/GenBank/DDBJ databases">
        <title>Glucose-regulated localization of liver glycogen synthase at the hepatocyte periphery.</title>
        <authorList>
            <person name="Ferrer J.C."/>
            <person name="Baque S."/>
            <person name="Guinovart J.J."/>
        </authorList>
    </citation>
    <scope>NUCLEOTIDE SEQUENCE [MRNA]</scope>
    <source>
        <strain>Wistar</strain>
        <tissue>Liver</tissue>
    </source>
</reference>
<reference key="3">
    <citation type="journal article" date="1992" name="Arch. Biochem. Biophys.">
        <title>Comparative characterization of human and rat liver glycogen synthase.</title>
        <authorList>
            <person name="Westphal S.A."/>
            <person name="Nuttall F.Q."/>
        </authorList>
    </citation>
    <scope>FUNCTION</scope>
    <scope>CATALYTIC ACTIVITY</scope>
    <scope>ACTIVITY REGULATION</scope>
    <scope>BIOPHYSICOCHEMICAL PROPERTIES</scope>
    <scope>PATHWAY</scope>
    <scope>TISSUE SPECIFICITY</scope>
    <source>
        <tissue>Liver</tissue>
    </source>
</reference>
<reference key="4">
    <citation type="journal article" date="2012" name="Nat. Commun.">
        <title>Quantitative maps of protein phosphorylation sites across 14 different rat organs and tissues.</title>
        <authorList>
            <person name="Lundby A."/>
            <person name="Secher A."/>
            <person name="Lage K."/>
            <person name="Nordsborg N.B."/>
            <person name="Dmytriyev A."/>
            <person name="Lundby C."/>
            <person name="Olsen J.V."/>
        </authorList>
    </citation>
    <scope>PHOSPHORYLATION [LARGE SCALE ANALYSIS] AT SER-8; SER-11 AND SER-627</scope>
    <scope>IDENTIFICATION BY MASS SPECTROMETRY [LARGE SCALE ANALYSIS]</scope>
</reference>
<feature type="chain" id="PRO_0000194769" description="Glycogen [starch] synthase, liver">
    <location>
        <begin position="1"/>
        <end position="704"/>
    </location>
</feature>
<feature type="region of interest" description="Disordered" evidence="5">
    <location>
        <begin position="620"/>
        <end position="704"/>
    </location>
</feature>
<feature type="compositionally biased region" description="Low complexity" evidence="5">
    <location>
        <begin position="647"/>
        <end position="657"/>
    </location>
</feature>
<feature type="compositionally biased region" description="Acidic residues" evidence="5">
    <location>
        <begin position="659"/>
        <end position="675"/>
    </location>
</feature>
<feature type="binding site" evidence="1">
    <location>
        <position position="40"/>
    </location>
    <ligand>
        <name>UDP</name>
        <dbReference type="ChEBI" id="CHEBI:58223"/>
    </ligand>
</feature>
<feature type="binding site" evidence="1">
    <location>
        <position position="205"/>
    </location>
    <ligand>
        <name>UDP-alpha-D-glucose</name>
        <dbReference type="ChEBI" id="CHEBI:58885"/>
    </ligand>
</feature>
<feature type="binding site" evidence="1">
    <location>
        <position position="211"/>
    </location>
    <ligand>
        <name>UDP-alpha-D-glucose</name>
        <dbReference type="ChEBI" id="CHEBI:58885"/>
    </ligand>
</feature>
<feature type="binding site" description="in other chain" evidence="1">
    <location>
        <position position="291"/>
    </location>
    <ligand>
        <name>alpha-D-glucose 6-phosphate</name>
        <dbReference type="ChEBI" id="CHEBI:58225"/>
        <note>allosteric activator; ligand shared between two neighboring subunits</note>
    </ligand>
</feature>
<feature type="binding site" description="in other chain" evidence="1">
    <location>
        <position position="292"/>
    </location>
    <ligand>
        <name>alpha-D-glucose 6-phosphate</name>
        <dbReference type="ChEBI" id="CHEBI:58225"/>
        <note>allosteric activator; ligand shared between two neighboring subunits</note>
    </ligand>
</feature>
<feature type="binding site" evidence="1">
    <location>
        <position position="294"/>
    </location>
    <ligand>
        <name>alpha-D-glucose 6-phosphate</name>
        <dbReference type="ChEBI" id="CHEBI:58225"/>
        <note>allosteric activator; ligand shared between two neighboring subunits</note>
    </ligand>
</feature>
<feature type="binding site" evidence="1">
    <location>
        <position position="297"/>
    </location>
    <ligand>
        <name>alpha-D-glucose 6-phosphate</name>
        <dbReference type="ChEBI" id="CHEBI:58225"/>
        <note>allosteric activator; ligand shared between two neighboring subunits</note>
    </ligand>
</feature>
<feature type="binding site" evidence="1">
    <location>
        <position position="301"/>
    </location>
    <ligand>
        <name>alpha-D-glucose 6-phosphate</name>
        <dbReference type="ChEBI" id="CHEBI:58225"/>
        <note>allosteric activator; ligand shared between two neighboring subunits</note>
    </ligand>
</feature>
<feature type="binding site" evidence="1">
    <location>
        <position position="331"/>
    </location>
    <ligand>
        <name>UDP</name>
        <dbReference type="ChEBI" id="CHEBI:58223"/>
    </ligand>
</feature>
<feature type="binding site" evidence="1">
    <location>
        <position position="331"/>
    </location>
    <ligand>
        <name>UDP-alpha-D-glucose</name>
        <dbReference type="ChEBI" id="CHEBI:58885"/>
    </ligand>
</feature>
<feature type="binding site" evidence="1">
    <location>
        <position position="501"/>
    </location>
    <ligand>
        <name>alpha-D-glucose 6-phosphate</name>
        <dbReference type="ChEBI" id="CHEBI:58225"/>
        <note>allosteric activator; ligand shared between two neighboring subunits</note>
    </ligand>
</feature>
<feature type="binding site" evidence="1">
    <location>
        <position position="510"/>
    </location>
    <ligand>
        <name>UDP-alpha-D-glucose</name>
        <dbReference type="ChEBI" id="CHEBI:58885"/>
    </ligand>
</feature>
<feature type="binding site" evidence="1">
    <location>
        <position position="512"/>
    </location>
    <ligand>
        <name>UDP-alpha-D-glucose</name>
        <dbReference type="ChEBI" id="CHEBI:58885"/>
    </ligand>
</feature>
<feature type="binding site" evidence="1">
    <location>
        <position position="513"/>
    </location>
    <ligand>
        <name>UDP-alpha-D-glucose</name>
        <dbReference type="ChEBI" id="CHEBI:58885"/>
    </ligand>
</feature>
<feature type="binding site" evidence="1">
    <location>
        <position position="515"/>
    </location>
    <ligand>
        <name>UDP</name>
        <dbReference type="ChEBI" id="CHEBI:58223"/>
    </ligand>
</feature>
<feature type="binding site" evidence="1">
    <location>
        <position position="582"/>
    </location>
    <ligand>
        <name>alpha-D-glucose 6-phosphate</name>
        <dbReference type="ChEBI" id="CHEBI:58225"/>
        <note>allosteric activator; ligand shared between two neighboring subunits</note>
    </ligand>
</feature>
<feature type="binding site" evidence="1">
    <location>
        <position position="586"/>
    </location>
    <ligand>
        <name>alpha-D-glucose 6-phosphate</name>
        <dbReference type="ChEBI" id="CHEBI:58225"/>
        <note>allosteric activator; ligand shared between two neighboring subunits</note>
    </ligand>
</feature>
<feature type="modified residue" description="Phosphoserine" evidence="10">
    <location>
        <position position="8"/>
    </location>
</feature>
<feature type="modified residue" description="Phosphoserine" evidence="10">
    <location>
        <position position="11"/>
    </location>
</feature>
<feature type="modified residue" description="Phosphoserine" evidence="10">
    <location>
        <position position="627"/>
    </location>
</feature>
<feature type="modified residue" description="Phosphoserine; by GSK3-alpha and GSK3-beta" evidence="2">
    <location>
        <position position="641"/>
    </location>
</feature>
<feature type="modified residue" description="Phosphoserine; by GSK3-alpha and GSK3-beta" evidence="2">
    <location>
        <position position="645"/>
    </location>
</feature>
<feature type="modified residue" description="Phosphoserine; by GSK3-alpha and GSK3-beta" evidence="2">
    <location>
        <position position="649"/>
    </location>
</feature>
<feature type="modified residue" description="Phosphoserine; by GSK3-alpha and GSK3-beta" evidence="2">
    <location>
        <position position="653"/>
    </location>
</feature>
<feature type="modified residue" description="Phosphoserine; by CK2" evidence="2">
    <location>
        <position position="657"/>
    </location>
</feature>
<feature type="modified residue" description="Phosphoserine" evidence="3">
    <location>
        <position position="684"/>
    </location>
</feature>
<feature type="sequence conflict" description="In Ref. 1; AAA41255." evidence="7" ref="1">
    <original>E</original>
    <variation>R</variation>
    <location>
        <position position="82"/>
    </location>
</feature>
<feature type="sequence conflict" description="In Ref. 1; AAA41255." evidence="7" ref="1">
    <original>H</original>
    <variation>D</variation>
    <location>
        <position position="268"/>
    </location>
</feature>
<feature type="sequence conflict" description="In Ref. 1; AAA41255." evidence="7" ref="1">
    <original>RRF</original>
    <variation>SV</variation>
    <location>
        <begin position="555"/>
        <end position="557"/>
    </location>
</feature>
<feature type="sequence conflict" description="In Ref. 1; AAA41255." evidence="7" ref="1">
    <original>H</original>
    <variation>Y</variation>
    <location>
        <position position="622"/>
    </location>
</feature>
<accession>P17625</accession>
<accession>Q99MF8</accession>
<evidence type="ECO:0000250" key="1">
    <source>
        <dbReference type="UniProtKB" id="P13807"/>
    </source>
</evidence>
<evidence type="ECO:0000250" key="2">
    <source>
        <dbReference type="UniProtKB" id="P13834"/>
    </source>
</evidence>
<evidence type="ECO:0000250" key="3">
    <source>
        <dbReference type="UniProtKB" id="P54840"/>
    </source>
</evidence>
<evidence type="ECO:0000250" key="4">
    <source>
        <dbReference type="UniProtKB" id="Q8VCB3"/>
    </source>
</evidence>
<evidence type="ECO:0000256" key="5">
    <source>
        <dbReference type="SAM" id="MobiDB-lite"/>
    </source>
</evidence>
<evidence type="ECO:0000269" key="6">
    <source>
    </source>
</evidence>
<evidence type="ECO:0000305" key="7"/>
<evidence type="ECO:0000305" key="8">
    <source>
    </source>
</evidence>
<evidence type="ECO:0000312" key="9">
    <source>
        <dbReference type="RGD" id="2773"/>
    </source>
</evidence>
<evidence type="ECO:0007744" key="10">
    <source>
    </source>
</evidence>
<proteinExistence type="evidence at protein level"/>
<comment type="function">
    <text evidence="6">Glycogen synthase participates in the glycogen biosynthetic process along with glycogenin and glycogen branching enzyme. Extends the primer composed of a few glucose units formed by glycogenin by adding new glucose units to it. In this context, glycogen synthase transfers the glycosyl residue from UDP-Glc to the non-reducing end of alpha-1,4-glucan.</text>
</comment>
<comment type="catalytic activity">
    <reaction evidence="6">
        <text>[(1-&gt;4)-alpha-D-glucosyl](n) + UDP-alpha-D-glucose = [(1-&gt;4)-alpha-D-glucosyl](n+1) + UDP + H(+)</text>
        <dbReference type="Rhea" id="RHEA:18549"/>
        <dbReference type="Rhea" id="RHEA-COMP:9584"/>
        <dbReference type="Rhea" id="RHEA-COMP:9587"/>
        <dbReference type="ChEBI" id="CHEBI:15378"/>
        <dbReference type="ChEBI" id="CHEBI:15444"/>
        <dbReference type="ChEBI" id="CHEBI:58223"/>
        <dbReference type="ChEBI" id="CHEBI:58885"/>
        <dbReference type="EC" id="2.4.1.11"/>
    </reaction>
    <physiologicalReaction direction="left-to-right" evidence="6">
        <dbReference type="Rhea" id="RHEA:18550"/>
    </physiologicalReaction>
</comment>
<comment type="activity regulation">
    <text evidence="6">Allosteric activation by glucose-6-phosphate (PubMed:1731614). Phosphorylation reduces the activity towards UDP-glucose (PubMed:1731614). When in the non-phosphorylated state, glycogen synthase does not require glucose-6-phosphate as an allosteric activator; when phosphorylated it does (PubMed:1731614).</text>
</comment>
<comment type="biophysicochemical properties">
    <kinetics>
        <KM evidence="6">1.4 mM for UDP-alpha-D-glucose (UDPG) (in the absence of glucose-6-phosphate) (poorly or non-phosphorylated state)</KM>
        <KM evidence="6">1 mM for UDP-alpha-D-glucose (UDPG) (in the presence of 50 uM glucose-6-phosphate) (poorly or non-phosphorylated state)</KM>
        <KM evidence="6">0.2 mM for UDP-alpha-D-glucose (UDPG) (in the presence of 7.2 mM glucose-6-phosphate) (poorly or non-phosphorylated state)</KM>
        <KM evidence="6">32 mM for UDP-alpha-D-glucose (UDPG) (in the absence of glucose-6-phosphate) (most phosphorylated state)</KM>
        <KM evidence="6">17 mM for UDP-alpha-D-glucose (UDPG) (in the presence of 70 uM of glucose-6-phosphate) (most phosphorylated state)</KM>
        <KM evidence="6">11 mM for UDP-alpha-D-glucose (UDPG) (in the presence of 200 uM of glucose-6-phosphate) (most phosphorylated state)</KM>
        <KM evidence="6">0.4 mM for UDP-alpha-D-glucose (UDPG) (in the presence of 7.2 mM glucose-6-phosphate) (most phosphorylated state)</KM>
    </kinetics>
    <phDependence>
        <text evidence="6">Optimum pH is 7.5-8.5 (at 25 degrees Celsius) (non-phosphorylated state). Optimum pH is 8.5 (at 25 degrees Celsius) (most phosphorylated state).</text>
    </phDependence>
    <temperatureDependence>
        <text evidence="6">Optimum temperature is 30-40 degrees Celsius.</text>
    </temperatureDependence>
</comment>
<comment type="pathway">
    <text evidence="6">Glycan biosynthesis; glycogen biosynthesis.</text>
</comment>
<comment type="subunit">
    <text evidence="1 4">Part of the glycogen synthase (GS)-glycogenin complex, a heterooctamer composed of a tetramer of GS and 2 dimers of glycogenin, where each GS protomer binds to one glycogenin subunit (via glycogenin C-terminus); the GS tetramer may dissociate from glycogenin dimers to continue glycogen polymerization on its own (By similarity). May also form a heterooctamer complex with GYG1 (via GYG1 C-terminus) (By similarity).</text>
</comment>
<comment type="tissue specificity">
    <text evidence="6">Specifically expressed in liver (at protein level).</text>
</comment>
<comment type="PTM">
    <text evidence="1 2 4">Primed phosphorylation at Ser-657 (site 5) by CSNK2A1 and CSNK2A2 is required for inhibitory phosphorylation at Ser-641 (site 3a), Ser-645 (site 3b), Ser-649 (site 3c) and Ser-653 (site 4) by GSK3A an GSK3B. Dephosphorylation at Ser-641 and Ser-645 by PP1 activates the enzyme (By similarity). Phosphorylation at Ser-8 is not required for interaction with GYG1 (By similarity). Interaction with GYG1 does not regulate the phosphorylation at Ser-8 and Ser-641 (By similarity).</text>
</comment>
<comment type="similarity">
    <text evidence="7">Belongs to the glycosyltransferase 3 family.</text>
</comment>
<gene>
    <name evidence="9" type="primary">Gys2</name>
</gene>
<name>GYS2_RAT</name>
<keyword id="KW-0021">Allosteric enzyme</keyword>
<keyword id="KW-0320">Glycogen biosynthesis</keyword>
<keyword id="KW-0328">Glycosyltransferase</keyword>
<keyword id="KW-0597">Phosphoprotein</keyword>
<keyword id="KW-1185">Reference proteome</keyword>
<keyword id="KW-0808">Transferase</keyword>
<dbReference type="EC" id="2.4.1.11" evidence="6"/>
<dbReference type="EMBL" id="J05446">
    <property type="protein sequence ID" value="AAA41255.1"/>
    <property type="molecule type" value="mRNA"/>
</dbReference>
<dbReference type="EMBL" id="AF346902">
    <property type="protein sequence ID" value="AAK16592.1"/>
    <property type="molecule type" value="mRNA"/>
</dbReference>
<dbReference type="PIR" id="A35362">
    <property type="entry name" value="A35362"/>
</dbReference>
<dbReference type="SMR" id="P17625"/>
<dbReference type="FunCoup" id="P17625">
    <property type="interactions" value="138"/>
</dbReference>
<dbReference type="IntAct" id="P17625">
    <property type="interactions" value="1"/>
</dbReference>
<dbReference type="STRING" id="10116.ENSRNOP00000074743"/>
<dbReference type="CAZy" id="GT3">
    <property type="family name" value="Glycosyltransferase Family 3"/>
</dbReference>
<dbReference type="iPTMnet" id="P17625"/>
<dbReference type="PhosphoSitePlus" id="P17625"/>
<dbReference type="PaxDb" id="10116-ENSRNOP00000059573"/>
<dbReference type="UCSC" id="RGD:2773">
    <property type="organism name" value="rat"/>
</dbReference>
<dbReference type="AGR" id="RGD:2773"/>
<dbReference type="RGD" id="2773">
    <property type="gene designation" value="Gys2"/>
</dbReference>
<dbReference type="eggNOG" id="KOG3742">
    <property type="taxonomic scope" value="Eukaryota"/>
</dbReference>
<dbReference type="InParanoid" id="P17625"/>
<dbReference type="PhylomeDB" id="P17625"/>
<dbReference type="UniPathway" id="UPA00164"/>
<dbReference type="PRO" id="PR:P17625"/>
<dbReference type="Proteomes" id="UP000002494">
    <property type="component" value="Unplaced"/>
</dbReference>
<dbReference type="GO" id="GO:0005938">
    <property type="term" value="C:cell cortex"/>
    <property type="evidence" value="ECO:0000314"/>
    <property type="project" value="UniProtKB"/>
</dbReference>
<dbReference type="GO" id="GO:0030864">
    <property type="term" value="C:cortical actin cytoskeleton"/>
    <property type="evidence" value="ECO:0000314"/>
    <property type="project" value="UniProtKB"/>
</dbReference>
<dbReference type="GO" id="GO:0005737">
    <property type="term" value="C:cytoplasm"/>
    <property type="evidence" value="ECO:0000314"/>
    <property type="project" value="UniProtKB"/>
</dbReference>
<dbReference type="GO" id="GO:0005856">
    <property type="term" value="C:cytoskeleton"/>
    <property type="evidence" value="ECO:0000314"/>
    <property type="project" value="UniProtKB"/>
</dbReference>
<dbReference type="GO" id="GO:0005829">
    <property type="term" value="C:cytosol"/>
    <property type="evidence" value="ECO:0000314"/>
    <property type="project" value="UniProtKB"/>
</dbReference>
<dbReference type="GO" id="GO:0004373">
    <property type="term" value="F:alpha-1,4-glucan glucosyltransferase (UDP-glucose donor) activity"/>
    <property type="evidence" value="ECO:0000314"/>
    <property type="project" value="UniProtKB"/>
</dbReference>
<dbReference type="GO" id="GO:0005536">
    <property type="term" value="F:D-glucose binding"/>
    <property type="evidence" value="ECO:0000314"/>
    <property type="project" value="RGD"/>
</dbReference>
<dbReference type="GO" id="GO:0005978">
    <property type="term" value="P:glycogen biosynthetic process"/>
    <property type="evidence" value="ECO:0000314"/>
    <property type="project" value="UniProtKB"/>
</dbReference>
<dbReference type="GO" id="GO:0005977">
    <property type="term" value="P:glycogen metabolic process"/>
    <property type="evidence" value="ECO:0000314"/>
    <property type="project" value="RGD"/>
</dbReference>
<dbReference type="GO" id="GO:0009749">
    <property type="term" value="P:response to glucose"/>
    <property type="evidence" value="ECO:0000314"/>
    <property type="project" value="UniProtKB"/>
</dbReference>
<dbReference type="CDD" id="cd03793">
    <property type="entry name" value="GT3_GSY2-like"/>
    <property type="match status" value="1"/>
</dbReference>
<dbReference type="FunFam" id="3.40.50.2000:FF:000014">
    <property type="entry name" value="Glycogen [starch] synthase"/>
    <property type="match status" value="1"/>
</dbReference>
<dbReference type="FunFam" id="3.40.50.2000:FF:000028">
    <property type="entry name" value="Glycogen [starch] synthase"/>
    <property type="match status" value="1"/>
</dbReference>
<dbReference type="Gene3D" id="3.40.50.2000">
    <property type="entry name" value="Glycogen Phosphorylase B"/>
    <property type="match status" value="2"/>
</dbReference>
<dbReference type="InterPro" id="IPR008631">
    <property type="entry name" value="Glycogen_synth"/>
</dbReference>
<dbReference type="PANTHER" id="PTHR10176:SF1">
    <property type="entry name" value="GLYCOGEN [STARCH] SYNTHASE, LIVER"/>
    <property type="match status" value="1"/>
</dbReference>
<dbReference type="PANTHER" id="PTHR10176">
    <property type="entry name" value="GLYCOGEN SYNTHASE"/>
    <property type="match status" value="1"/>
</dbReference>
<dbReference type="Pfam" id="PF05693">
    <property type="entry name" value="Glycogen_syn"/>
    <property type="match status" value="1"/>
</dbReference>
<dbReference type="SUPFAM" id="SSF53756">
    <property type="entry name" value="UDP-Glycosyltransferase/glycogen phosphorylase"/>
    <property type="match status" value="2"/>
</dbReference>